<gene>
    <name evidence="1" type="primary">rpmH</name>
    <name type="ordered locus">NGK_2661</name>
</gene>
<protein>
    <recommendedName>
        <fullName evidence="1">Large ribosomal subunit protein bL34</fullName>
    </recommendedName>
    <alternativeName>
        <fullName evidence="3">50S ribosomal protein L34</fullName>
    </alternativeName>
</protein>
<accession>B4RJJ6</accession>
<organism>
    <name type="scientific">Neisseria gonorrhoeae (strain NCCP11945)</name>
    <dbReference type="NCBI Taxonomy" id="521006"/>
    <lineage>
        <taxon>Bacteria</taxon>
        <taxon>Pseudomonadati</taxon>
        <taxon>Pseudomonadota</taxon>
        <taxon>Betaproteobacteria</taxon>
        <taxon>Neisseriales</taxon>
        <taxon>Neisseriaceae</taxon>
        <taxon>Neisseria</taxon>
    </lineage>
</organism>
<dbReference type="EMBL" id="CP001050">
    <property type="protein sequence ID" value="ACF31260.1"/>
    <property type="molecule type" value="Genomic_DNA"/>
</dbReference>
<dbReference type="RefSeq" id="WP_002214728.1">
    <property type="nucleotide sequence ID" value="NC_011035.1"/>
</dbReference>
<dbReference type="SMR" id="B4RJJ6"/>
<dbReference type="GeneID" id="94582113"/>
<dbReference type="KEGG" id="ngk:NGK_2661"/>
<dbReference type="HOGENOM" id="CLU_129938_2_0_4"/>
<dbReference type="Proteomes" id="UP000002564">
    <property type="component" value="Chromosome"/>
</dbReference>
<dbReference type="GO" id="GO:1990904">
    <property type="term" value="C:ribonucleoprotein complex"/>
    <property type="evidence" value="ECO:0007669"/>
    <property type="project" value="UniProtKB-KW"/>
</dbReference>
<dbReference type="GO" id="GO:0005840">
    <property type="term" value="C:ribosome"/>
    <property type="evidence" value="ECO:0007669"/>
    <property type="project" value="UniProtKB-KW"/>
</dbReference>
<dbReference type="GO" id="GO:0003735">
    <property type="term" value="F:structural constituent of ribosome"/>
    <property type="evidence" value="ECO:0007669"/>
    <property type="project" value="InterPro"/>
</dbReference>
<dbReference type="GO" id="GO:0006412">
    <property type="term" value="P:translation"/>
    <property type="evidence" value="ECO:0007669"/>
    <property type="project" value="UniProtKB-UniRule"/>
</dbReference>
<dbReference type="FunFam" id="1.10.287.3980:FF:000001">
    <property type="entry name" value="Mitochondrial ribosomal protein L34"/>
    <property type="match status" value="1"/>
</dbReference>
<dbReference type="Gene3D" id="1.10.287.3980">
    <property type="match status" value="1"/>
</dbReference>
<dbReference type="HAMAP" id="MF_00391">
    <property type="entry name" value="Ribosomal_bL34"/>
    <property type="match status" value="1"/>
</dbReference>
<dbReference type="InterPro" id="IPR000271">
    <property type="entry name" value="Ribosomal_bL34"/>
</dbReference>
<dbReference type="InterPro" id="IPR020939">
    <property type="entry name" value="Ribosomal_bL34_CS"/>
</dbReference>
<dbReference type="NCBIfam" id="TIGR01030">
    <property type="entry name" value="rpmH_bact"/>
    <property type="match status" value="1"/>
</dbReference>
<dbReference type="PANTHER" id="PTHR14503:SF4">
    <property type="entry name" value="LARGE RIBOSOMAL SUBUNIT PROTEIN BL34M"/>
    <property type="match status" value="1"/>
</dbReference>
<dbReference type="PANTHER" id="PTHR14503">
    <property type="entry name" value="MITOCHONDRIAL RIBOSOMAL PROTEIN 34 FAMILY MEMBER"/>
    <property type="match status" value="1"/>
</dbReference>
<dbReference type="Pfam" id="PF00468">
    <property type="entry name" value="Ribosomal_L34"/>
    <property type="match status" value="1"/>
</dbReference>
<dbReference type="PROSITE" id="PS00784">
    <property type="entry name" value="RIBOSOMAL_L34"/>
    <property type="match status" value="1"/>
</dbReference>
<comment type="similarity">
    <text evidence="1">Belongs to the bacterial ribosomal protein bL34 family.</text>
</comment>
<proteinExistence type="inferred from homology"/>
<name>RL34_NEIG2</name>
<feature type="chain" id="PRO_1000196077" description="Large ribosomal subunit protein bL34">
    <location>
        <begin position="1"/>
        <end position="44"/>
    </location>
</feature>
<feature type="region of interest" description="Disordered" evidence="2">
    <location>
        <begin position="24"/>
        <end position="44"/>
    </location>
</feature>
<feature type="compositionally biased region" description="Basic residues" evidence="2">
    <location>
        <begin position="34"/>
        <end position="44"/>
    </location>
</feature>
<keyword id="KW-0687">Ribonucleoprotein</keyword>
<keyword id="KW-0689">Ribosomal protein</keyword>
<sequence length="44" mass="5051">MKRTYQPSVTKRKRTHGFLVRSKTRGGRAVLAARRAKGRKRLAV</sequence>
<evidence type="ECO:0000255" key="1">
    <source>
        <dbReference type="HAMAP-Rule" id="MF_00391"/>
    </source>
</evidence>
<evidence type="ECO:0000256" key="2">
    <source>
        <dbReference type="SAM" id="MobiDB-lite"/>
    </source>
</evidence>
<evidence type="ECO:0000305" key="3"/>
<reference key="1">
    <citation type="journal article" date="2008" name="J. Bacteriol.">
        <title>Complete genome sequence of Neisseria gonorrhoeae NCCP11945.</title>
        <authorList>
            <person name="Chung G.T."/>
            <person name="Yoo J.S."/>
            <person name="Oh H.B."/>
            <person name="Lee Y.S."/>
            <person name="Cha S.H."/>
            <person name="Kim S.J."/>
            <person name="Yoo C.K."/>
        </authorList>
    </citation>
    <scope>NUCLEOTIDE SEQUENCE [LARGE SCALE GENOMIC DNA]</scope>
    <source>
        <strain>NCCP11945</strain>
    </source>
</reference>